<protein>
    <recommendedName>
        <fullName>Proteasome subunit beta type-3</fullName>
    </recommendedName>
    <alternativeName>
        <fullName>Proteasome chain 13</fullName>
    </alternativeName>
    <alternativeName>
        <fullName>Proteasome component C10-II</fullName>
    </alternativeName>
    <alternativeName>
        <fullName>Proteasome theta chain</fullName>
    </alternativeName>
</protein>
<accession>O73817</accession>
<name>PSB3_ONCMY</name>
<proteinExistence type="evidence at transcript level"/>
<reference key="1">
    <citation type="submission" date="1998-04" db="EMBL/GenBank/DDBJ databases">
        <title>Isolation of a rainbow trout (Oncorhynchus mykiss) proteasome cDNA.</title>
        <authorList>
            <person name="Martin S.A.M."/>
        </authorList>
    </citation>
    <scope>NUCLEOTIDE SEQUENCE [MRNA]</scope>
</reference>
<gene>
    <name type="primary">psmb3</name>
</gene>
<evidence type="ECO:0000250" key="1"/>
<evidence type="ECO:0000255" key="2">
    <source>
        <dbReference type="PROSITE-ProRule" id="PRU00809"/>
    </source>
</evidence>
<organism>
    <name type="scientific">Oncorhynchus mykiss</name>
    <name type="common">Rainbow trout</name>
    <name type="synonym">Salmo gairdneri</name>
    <dbReference type="NCBI Taxonomy" id="8022"/>
    <lineage>
        <taxon>Eukaryota</taxon>
        <taxon>Metazoa</taxon>
        <taxon>Chordata</taxon>
        <taxon>Craniata</taxon>
        <taxon>Vertebrata</taxon>
        <taxon>Euteleostomi</taxon>
        <taxon>Actinopterygii</taxon>
        <taxon>Neopterygii</taxon>
        <taxon>Teleostei</taxon>
        <taxon>Protacanthopterygii</taxon>
        <taxon>Salmoniformes</taxon>
        <taxon>Salmonidae</taxon>
        <taxon>Salmoninae</taxon>
        <taxon>Oncorhynchus</taxon>
    </lineage>
</organism>
<sequence length="205" mass="23021">MSIMSYNGGAVMAMKGKQCVAIAADRRFGVQAQMVTTDFQKIFPMGDRLYIGLAGLATDVQTVSQRLKFRLNLYELKEGRQIKPKTFMSMVSNLLYERRFGPYYIEPVIAGLDPKTFEPFICSLDLIGCPMVTEDFVVSGTCSEQMYGMCESLWEPDMEPEDLFETISQAMLNAVDRDAVSGMGVVVQVIEKDKITTRTLKARMD</sequence>
<comment type="function">
    <text>Non-catalytic component of the proteasome, a multicatalytic proteinase complex which is characterized by its ability to cleave peptides with Arg, Phe, Tyr, Leu, and Glu adjacent to the leaving group at neutral or slightly basic pH. The proteasome has an ATP-dependent proteolytic activity.</text>
</comment>
<comment type="subunit">
    <text evidence="1">The 26S proteasome consists of a 20S proteasome core and two 19S regulatory subunits. The 20S proteasome core is composed of 28 subunits that are arranged in four stacked rings, resulting in a barrel-shaped structure. The two end rings are each formed by seven alpha subunits, and the two central rings are each formed by seven beta subunits. The catalytic chamber with the active sites is on the inside of the barrel (By similarity).</text>
</comment>
<comment type="subcellular location">
    <subcellularLocation>
        <location>Cytoplasm</location>
    </subcellularLocation>
    <subcellularLocation>
        <location>Nucleus</location>
    </subcellularLocation>
</comment>
<comment type="similarity">
    <text evidence="2">Belongs to the peptidase T1B family.</text>
</comment>
<keyword id="KW-0963">Cytoplasm</keyword>
<keyword id="KW-0539">Nucleus</keyword>
<keyword id="KW-0647">Proteasome</keyword>
<dbReference type="EMBL" id="AF058707">
    <property type="protein sequence ID" value="AAC14141.1"/>
    <property type="molecule type" value="mRNA"/>
</dbReference>
<dbReference type="RefSeq" id="NP_001117722.1">
    <property type="nucleotide sequence ID" value="NM_001124250.1"/>
</dbReference>
<dbReference type="SMR" id="O73817"/>
<dbReference type="MEROPS" id="T01.983"/>
<dbReference type="Ensembl" id="ENSOMYT00000017360.2">
    <property type="protein sequence ID" value="ENSOMYP00000015730.1"/>
    <property type="gene ID" value="ENSOMYG00000007720.2"/>
</dbReference>
<dbReference type="GeneID" id="100135869"/>
<dbReference type="KEGG" id="omy:100135869"/>
<dbReference type="GeneTree" id="ENSGT00550000074820"/>
<dbReference type="OrthoDB" id="204949at2759"/>
<dbReference type="Proteomes" id="UP000694395">
    <property type="component" value="Chromosome 13"/>
</dbReference>
<dbReference type="GO" id="GO:0005737">
    <property type="term" value="C:cytoplasm"/>
    <property type="evidence" value="ECO:0007669"/>
    <property type="project" value="UniProtKB-SubCell"/>
</dbReference>
<dbReference type="GO" id="GO:0005634">
    <property type="term" value="C:nucleus"/>
    <property type="evidence" value="ECO:0007669"/>
    <property type="project" value="UniProtKB-SubCell"/>
</dbReference>
<dbReference type="GO" id="GO:0005839">
    <property type="term" value="C:proteasome core complex"/>
    <property type="evidence" value="ECO:0000250"/>
    <property type="project" value="UniProtKB"/>
</dbReference>
<dbReference type="GO" id="GO:0019774">
    <property type="term" value="C:proteasome core complex, beta-subunit complex"/>
    <property type="evidence" value="ECO:0000250"/>
    <property type="project" value="UniProtKB"/>
</dbReference>
<dbReference type="GO" id="GO:0043161">
    <property type="term" value="P:proteasome-mediated ubiquitin-dependent protein catabolic process"/>
    <property type="evidence" value="ECO:0007669"/>
    <property type="project" value="InterPro"/>
</dbReference>
<dbReference type="CDD" id="cd03759">
    <property type="entry name" value="proteasome_beta_type_3"/>
    <property type="match status" value="1"/>
</dbReference>
<dbReference type="FunFam" id="3.60.20.10:FF:000003">
    <property type="entry name" value="Proteasome subunit beta type-3"/>
    <property type="match status" value="1"/>
</dbReference>
<dbReference type="Gene3D" id="3.60.20.10">
    <property type="entry name" value="Glutamine Phosphoribosylpyrophosphate, subunit 1, domain 1"/>
    <property type="match status" value="1"/>
</dbReference>
<dbReference type="InterPro" id="IPR029055">
    <property type="entry name" value="Ntn_hydrolases_N"/>
</dbReference>
<dbReference type="InterPro" id="IPR033811">
    <property type="entry name" value="Proteasome_beta_3"/>
</dbReference>
<dbReference type="InterPro" id="IPR016050">
    <property type="entry name" value="Proteasome_bsu_CS"/>
</dbReference>
<dbReference type="InterPro" id="IPR001353">
    <property type="entry name" value="Proteasome_sua/b"/>
</dbReference>
<dbReference type="InterPro" id="IPR023333">
    <property type="entry name" value="Proteasome_suB-type"/>
</dbReference>
<dbReference type="PANTHER" id="PTHR32194">
    <property type="entry name" value="METALLOPROTEASE TLDD"/>
    <property type="match status" value="1"/>
</dbReference>
<dbReference type="PANTHER" id="PTHR32194:SF10">
    <property type="entry name" value="PROTEASOME SUBUNIT BETA TYPE-3"/>
    <property type="match status" value="1"/>
</dbReference>
<dbReference type="Pfam" id="PF00227">
    <property type="entry name" value="Proteasome"/>
    <property type="match status" value="1"/>
</dbReference>
<dbReference type="SUPFAM" id="SSF56235">
    <property type="entry name" value="N-terminal nucleophile aminohydrolases (Ntn hydrolases)"/>
    <property type="match status" value="1"/>
</dbReference>
<dbReference type="PROSITE" id="PS00854">
    <property type="entry name" value="PROTEASOME_BETA_1"/>
    <property type="match status" value="1"/>
</dbReference>
<dbReference type="PROSITE" id="PS51476">
    <property type="entry name" value="PROTEASOME_BETA_2"/>
    <property type="match status" value="1"/>
</dbReference>
<feature type="chain" id="PRO_0000148060" description="Proteasome subunit beta type-3">
    <location>
        <begin position="1"/>
        <end position="205"/>
    </location>
</feature>